<gene>
    <name evidence="1" type="primary">pth</name>
    <name type="ordered locus">Gbem_2766</name>
</gene>
<proteinExistence type="inferred from homology"/>
<sequence length="188" mass="20465">MAAKLIVGLGNPGPKYSWTRHNAGFMVLDRLASLSGIQVTRKAFSGLSGDGNWSSERVYLLKPQTFMNLSGRSVAEALRFYKLSLSDLIVIHDDLDIPFGKVKLKEGGGHGGHNGLRSLAQELGSSAYARIRVGIGRPVHGDVVNFVLTNFAKEEMDSLLEVLDTSVDALEMMIKEGMPKAMSIFNAR</sequence>
<reference key="1">
    <citation type="submission" date="2008-07" db="EMBL/GenBank/DDBJ databases">
        <title>Complete sequence of Geobacter bemidjiensis BEM.</title>
        <authorList>
            <consortium name="US DOE Joint Genome Institute"/>
            <person name="Lucas S."/>
            <person name="Copeland A."/>
            <person name="Lapidus A."/>
            <person name="Glavina del Rio T."/>
            <person name="Dalin E."/>
            <person name="Tice H."/>
            <person name="Bruce D."/>
            <person name="Goodwin L."/>
            <person name="Pitluck S."/>
            <person name="Kiss H."/>
            <person name="Brettin T."/>
            <person name="Detter J.C."/>
            <person name="Han C."/>
            <person name="Kuske C.R."/>
            <person name="Schmutz J."/>
            <person name="Larimer F."/>
            <person name="Land M."/>
            <person name="Hauser L."/>
            <person name="Kyrpides N."/>
            <person name="Lykidis A."/>
            <person name="Lovley D."/>
            <person name="Richardson P."/>
        </authorList>
    </citation>
    <scope>NUCLEOTIDE SEQUENCE [LARGE SCALE GENOMIC DNA]</scope>
    <source>
        <strain>ATCC BAA-1014 / DSM 16622 / JCM 12645 / Bem</strain>
    </source>
</reference>
<evidence type="ECO:0000255" key="1">
    <source>
        <dbReference type="HAMAP-Rule" id="MF_00083"/>
    </source>
</evidence>
<name>PTH_CITBB</name>
<feature type="chain" id="PRO_1000092944" description="Peptidyl-tRNA hydrolase">
    <location>
        <begin position="1"/>
        <end position="188"/>
    </location>
</feature>
<feature type="active site" description="Proton acceptor" evidence="1">
    <location>
        <position position="21"/>
    </location>
</feature>
<feature type="binding site" evidence="1">
    <location>
        <position position="16"/>
    </location>
    <ligand>
        <name>tRNA</name>
        <dbReference type="ChEBI" id="CHEBI:17843"/>
    </ligand>
</feature>
<feature type="binding site" evidence="1">
    <location>
        <position position="66"/>
    </location>
    <ligand>
        <name>tRNA</name>
        <dbReference type="ChEBI" id="CHEBI:17843"/>
    </ligand>
</feature>
<feature type="binding site" evidence="1">
    <location>
        <position position="68"/>
    </location>
    <ligand>
        <name>tRNA</name>
        <dbReference type="ChEBI" id="CHEBI:17843"/>
    </ligand>
</feature>
<feature type="binding site" evidence="1">
    <location>
        <position position="114"/>
    </location>
    <ligand>
        <name>tRNA</name>
        <dbReference type="ChEBI" id="CHEBI:17843"/>
    </ligand>
</feature>
<feature type="site" description="Discriminates between blocked and unblocked aminoacyl-tRNA" evidence="1">
    <location>
        <position position="11"/>
    </location>
</feature>
<feature type="site" description="Stabilizes the basic form of H active site to accept a proton" evidence="1">
    <location>
        <position position="93"/>
    </location>
</feature>
<accession>B5EHX1</accession>
<protein>
    <recommendedName>
        <fullName evidence="1">Peptidyl-tRNA hydrolase</fullName>
        <shortName evidence="1">Pth</shortName>
        <ecNumber evidence="1">3.1.1.29</ecNumber>
    </recommendedName>
</protein>
<dbReference type="EC" id="3.1.1.29" evidence="1"/>
<dbReference type="EMBL" id="CP001124">
    <property type="protein sequence ID" value="ACH39770.1"/>
    <property type="molecule type" value="Genomic_DNA"/>
</dbReference>
<dbReference type="RefSeq" id="WP_012531196.1">
    <property type="nucleotide sequence ID" value="NC_011146.1"/>
</dbReference>
<dbReference type="SMR" id="B5EHX1"/>
<dbReference type="STRING" id="404380.Gbem_2766"/>
<dbReference type="KEGG" id="gbm:Gbem_2766"/>
<dbReference type="eggNOG" id="COG0193">
    <property type="taxonomic scope" value="Bacteria"/>
</dbReference>
<dbReference type="HOGENOM" id="CLU_062456_1_0_7"/>
<dbReference type="OrthoDB" id="9800507at2"/>
<dbReference type="Proteomes" id="UP000008825">
    <property type="component" value="Chromosome"/>
</dbReference>
<dbReference type="GO" id="GO:0005737">
    <property type="term" value="C:cytoplasm"/>
    <property type="evidence" value="ECO:0007669"/>
    <property type="project" value="UniProtKB-SubCell"/>
</dbReference>
<dbReference type="GO" id="GO:0004045">
    <property type="term" value="F:peptidyl-tRNA hydrolase activity"/>
    <property type="evidence" value="ECO:0007669"/>
    <property type="project" value="UniProtKB-UniRule"/>
</dbReference>
<dbReference type="GO" id="GO:0000049">
    <property type="term" value="F:tRNA binding"/>
    <property type="evidence" value="ECO:0007669"/>
    <property type="project" value="UniProtKB-UniRule"/>
</dbReference>
<dbReference type="GO" id="GO:0006515">
    <property type="term" value="P:protein quality control for misfolded or incompletely synthesized proteins"/>
    <property type="evidence" value="ECO:0007669"/>
    <property type="project" value="UniProtKB-UniRule"/>
</dbReference>
<dbReference type="GO" id="GO:0072344">
    <property type="term" value="P:rescue of stalled ribosome"/>
    <property type="evidence" value="ECO:0007669"/>
    <property type="project" value="UniProtKB-UniRule"/>
</dbReference>
<dbReference type="CDD" id="cd00462">
    <property type="entry name" value="PTH"/>
    <property type="match status" value="1"/>
</dbReference>
<dbReference type="FunFam" id="3.40.50.1470:FF:000001">
    <property type="entry name" value="Peptidyl-tRNA hydrolase"/>
    <property type="match status" value="1"/>
</dbReference>
<dbReference type="Gene3D" id="3.40.50.1470">
    <property type="entry name" value="Peptidyl-tRNA hydrolase"/>
    <property type="match status" value="1"/>
</dbReference>
<dbReference type="HAMAP" id="MF_00083">
    <property type="entry name" value="Pept_tRNA_hydro_bact"/>
    <property type="match status" value="1"/>
</dbReference>
<dbReference type="InterPro" id="IPR001328">
    <property type="entry name" value="Pept_tRNA_hydro"/>
</dbReference>
<dbReference type="InterPro" id="IPR018171">
    <property type="entry name" value="Pept_tRNA_hydro_CS"/>
</dbReference>
<dbReference type="InterPro" id="IPR036416">
    <property type="entry name" value="Pept_tRNA_hydro_sf"/>
</dbReference>
<dbReference type="NCBIfam" id="TIGR00447">
    <property type="entry name" value="pth"/>
    <property type="match status" value="1"/>
</dbReference>
<dbReference type="PANTHER" id="PTHR17224">
    <property type="entry name" value="PEPTIDYL-TRNA HYDROLASE"/>
    <property type="match status" value="1"/>
</dbReference>
<dbReference type="PANTHER" id="PTHR17224:SF1">
    <property type="entry name" value="PEPTIDYL-TRNA HYDROLASE"/>
    <property type="match status" value="1"/>
</dbReference>
<dbReference type="Pfam" id="PF01195">
    <property type="entry name" value="Pept_tRNA_hydro"/>
    <property type="match status" value="1"/>
</dbReference>
<dbReference type="SUPFAM" id="SSF53178">
    <property type="entry name" value="Peptidyl-tRNA hydrolase-like"/>
    <property type="match status" value="1"/>
</dbReference>
<dbReference type="PROSITE" id="PS01195">
    <property type="entry name" value="PEPT_TRNA_HYDROL_1"/>
    <property type="match status" value="1"/>
</dbReference>
<dbReference type="PROSITE" id="PS01196">
    <property type="entry name" value="PEPT_TRNA_HYDROL_2"/>
    <property type="match status" value="1"/>
</dbReference>
<comment type="function">
    <text evidence="1">Hydrolyzes ribosome-free peptidyl-tRNAs (with 1 or more amino acids incorporated), which drop off the ribosome during protein synthesis, or as a result of ribosome stalling.</text>
</comment>
<comment type="function">
    <text evidence="1">Catalyzes the release of premature peptidyl moieties from peptidyl-tRNA molecules trapped in stalled 50S ribosomal subunits, and thus maintains levels of free tRNAs and 50S ribosomes.</text>
</comment>
<comment type="catalytic activity">
    <reaction evidence="1">
        <text>an N-acyl-L-alpha-aminoacyl-tRNA + H2O = an N-acyl-L-amino acid + a tRNA + H(+)</text>
        <dbReference type="Rhea" id="RHEA:54448"/>
        <dbReference type="Rhea" id="RHEA-COMP:10123"/>
        <dbReference type="Rhea" id="RHEA-COMP:13883"/>
        <dbReference type="ChEBI" id="CHEBI:15377"/>
        <dbReference type="ChEBI" id="CHEBI:15378"/>
        <dbReference type="ChEBI" id="CHEBI:59874"/>
        <dbReference type="ChEBI" id="CHEBI:78442"/>
        <dbReference type="ChEBI" id="CHEBI:138191"/>
        <dbReference type="EC" id="3.1.1.29"/>
    </reaction>
</comment>
<comment type="subunit">
    <text evidence="1">Monomer.</text>
</comment>
<comment type="subcellular location">
    <subcellularLocation>
        <location evidence="1">Cytoplasm</location>
    </subcellularLocation>
</comment>
<comment type="similarity">
    <text evidence="1">Belongs to the PTH family.</text>
</comment>
<keyword id="KW-0963">Cytoplasm</keyword>
<keyword id="KW-0378">Hydrolase</keyword>
<keyword id="KW-1185">Reference proteome</keyword>
<keyword id="KW-0694">RNA-binding</keyword>
<keyword id="KW-0820">tRNA-binding</keyword>
<organism>
    <name type="scientific">Citrifermentans bemidjiense (strain ATCC BAA-1014 / DSM 16622 / JCM 12645 / Bem)</name>
    <name type="common">Geobacter bemidjiensis</name>
    <dbReference type="NCBI Taxonomy" id="404380"/>
    <lineage>
        <taxon>Bacteria</taxon>
        <taxon>Pseudomonadati</taxon>
        <taxon>Thermodesulfobacteriota</taxon>
        <taxon>Desulfuromonadia</taxon>
        <taxon>Geobacterales</taxon>
        <taxon>Geobacteraceae</taxon>
        <taxon>Citrifermentans</taxon>
    </lineage>
</organism>